<dbReference type="EMBL" id="AF522127">
    <property type="protein sequence ID" value="AAM82119.1"/>
    <property type="molecule type" value="Genomic_DNA"/>
</dbReference>
<dbReference type="GO" id="GO:0009507">
    <property type="term" value="C:chloroplast"/>
    <property type="evidence" value="ECO:0007669"/>
    <property type="project" value="UniProtKB-SubCell"/>
</dbReference>
<dbReference type="GO" id="GO:0003723">
    <property type="term" value="F:RNA binding"/>
    <property type="evidence" value="ECO:0007669"/>
    <property type="project" value="UniProtKB-KW"/>
</dbReference>
<dbReference type="GO" id="GO:0006397">
    <property type="term" value="P:mRNA processing"/>
    <property type="evidence" value="ECO:0007669"/>
    <property type="project" value="UniProtKB-KW"/>
</dbReference>
<dbReference type="GO" id="GO:0008380">
    <property type="term" value="P:RNA splicing"/>
    <property type="evidence" value="ECO:0007669"/>
    <property type="project" value="UniProtKB-UniRule"/>
</dbReference>
<dbReference type="GO" id="GO:0008033">
    <property type="term" value="P:tRNA processing"/>
    <property type="evidence" value="ECO:0007669"/>
    <property type="project" value="UniProtKB-KW"/>
</dbReference>
<dbReference type="HAMAP" id="MF_01390">
    <property type="entry name" value="MatK"/>
    <property type="match status" value="1"/>
</dbReference>
<dbReference type="InterPro" id="IPR024937">
    <property type="entry name" value="Domain_X"/>
</dbReference>
<dbReference type="InterPro" id="IPR002866">
    <property type="entry name" value="Maturase_MatK"/>
</dbReference>
<dbReference type="InterPro" id="IPR024942">
    <property type="entry name" value="Maturase_MatK_N"/>
</dbReference>
<dbReference type="PANTHER" id="PTHR34811">
    <property type="entry name" value="MATURASE K"/>
    <property type="match status" value="1"/>
</dbReference>
<dbReference type="PANTHER" id="PTHR34811:SF1">
    <property type="entry name" value="MATURASE K"/>
    <property type="match status" value="1"/>
</dbReference>
<dbReference type="Pfam" id="PF01348">
    <property type="entry name" value="Intron_maturas2"/>
    <property type="match status" value="1"/>
</dbReference>
<dbReference type="Pfam" id="PF01824">
    <property type="entry name" value="MatK_N"/>
    <property type="match status" value="1"/>
</dbReference>
<organism>
    <name type="scientific">Trifolium lupinaster</name>
    <name type="common">Lupine clover</name>
    <dbReference type="NCBI Taxonomy" id="74519"/>
    <lineage>
        <taxon>Eukaryota</taxon>
        <taxon>Viridiplantae</taxon>
        <taxon>Streptophyta</taxon>
        <taxon>Embryophyta</taxon>
        <taxon>Tracheophyta</taxon>
        <taxon>Spermatophyta</taxon>
        <taxon>Magnoliopsida</taxon>
        <taxon>eudicotyledons</taxon>
        <taxon>Gunneridae</taxon>
        <taxon>Pentapetalae</taxon>
        <taxon>rosids</taxon>
        <taxon>fabids</taxon>
        <taxon>Fabales</taxon>
        <taxon>Fabaceae</taxon>
        <taxon>Papilionoideae</taxon>
        <taxon>50 kb inversion clade</taxon>
        <taxon>NPAAA clade</taxon>
        <taxon>Hologalegina</taxon>
        <taxon>IRL clade</taxon>
        <taxon>Trifolieae</taxon>
        <taxon>Trifolium</taxon>
    </lineage>
</organism>
<sequence length="506" mass="60803">MKEYQVYLERARSRQQDFLYPLIFREYIYGLAYSHNFNRSIFLENVGYGNKYSLLNVKRLITRMYQQNHLIISANDSNKNPFLGYNKNFDSQIISEGFAIVVEIPFFLQLSSSLEEAEVIKSYKNVRSIHSIFPFLEDKFTYLNYVSDIQIPYPIHLEILVQILRYWVKDAPFFHLLRLFLYHFCNWNRFITTKKSISTFSKSNPRLFLFLYNFYVCEYESIFLFLRNKSSHLRLKSFSVFFERIFFYAKREHLVEVFAKDFSYTLPLFKDPNIHYVRYQGKCILASKNAPFLMKKWKHYFIHLWQCFFDVWSQPRTININQLSEHSFRLLGYFSNVRLNRSAVRSQMLQNTFLIEIVSKKLDIIVPIIPLIRSLAKAKFCNVLGHPISKPVWADSSDFDIIERFLRICRNLSHYYNGSSKKKSLYRIKYILRLSCIKTLACKHKSTVRAFLKRSGSEELLEEFFTEEEEILSLIFPRDSFTLHRFHRNRIWYLDILFSNDLVNDE</sequence>
<evidence type="ECO:0000255" key="1">
    <source>
        <dbReference type="HAMAP-Rule" id="MF_01390"/>
    </source>
</evidence>
<feature type="chain" id="PRO_0000143749" description="Maturase K">
    <location>
        <begin position="1"/>
        <end position="506"/>
    </location>
</feature>
<gene>
    <name evidence="1" type="primary">matK</name>
</gene>
<proteinExistence type="inferred from homology"/>
<keyword id="KW-0150">Chloroplast</keyword>
<keyword id="KW-0507">mRNA processing</keyword>
<keyword id="KW-0934">Plastid</keyword>
<keyword id="KW-0694">RNA-binding</keyword>
<keyword id="KW-0819">tRNA processing</keyword>
<protein>
    <recommendedName>
        <fullName evidence="1">Maturase K</fullName>
    </recommendedName>
    <alternativeName>
        <fullName evidence="1">Intron maturase</fullName>
    </alternativeName>
</protein>
<name>MATK_TRILP</name>
<geneLocation type="chloroplast"/>
<accession>Q8MCM8</accession>
<comment type="function">
    <text evidence="1">Usually encoded in the trnK tRNA gene intron. Probably assists in splicing its own and other chloroplast group II introns.</text>
</comment>
<comment type="subcellular location">
    <subcellularLocation>
        <location>Plastid</location>
        <location>Chloroplast</location>
    </subcellularLocation>
</comment>
<comment type="similarity">
    <text evidence="1">Belongs to the intron maturase 2 family. MatK subfamily.</text>
</comment>
<reference key="1">
    <citation type="book" date="2003" name="Advances in legume systematics - part 10">
        <title>Phylogenetic analyses of tribes Trifolieae and Vicieae based on sequences of the plastid gene matK (Papilionoideae: Leguminosae).</title>
        <editorList>
            <person name="Klitgaard B.B."/>
            <person name="Bruneau A."/>
        </editorList>
        <authorList>
            <person name="Steele K.P."/>
            <person name="Wojciechowski M.F."/>
        </authorList>
    </citation>
    <scope>NUCLEOTIDE SEQUENCE [GENOMIC DNA]</scope>
</reference>